<accession>A5N2K8</accession>
<proteinExistence type="inferred from homology"/>
<organism>
    <name type="scientific">Clostridium kluyveri (strain ATCC 8527 / DSM 555 / NBRC 12016 / NCIMB 10680 / K1)</name>
    <dbReference type="NCBI Taxonomy" id="431943"/>
    <lineage>
        <taxon>Bacteria</taxon>
        <taxon>Bacillati</taxon>
        <taxon>Bacillota</taxon>
        <taxon>Clostridia</taxon>
        <taxon>Eubacteriales</taxon>
        <taxon>Clostridiaceae</taxon>
        <taxon>Clostridium</taxon>
    </lineage>
</organism>
<comment type="function">
    <text evidence="1">Cleaves peptides in various proteins in a process that requires ATP hydrolysis. Has a chymotrypsin-like activity. Plays a major role in the degradation of misfolded proteins.</text>
</comment>
<comment type="catalytic activity">
    <reaction evidence="1">
        <text>Hydrolysis of proteins to small peptides in the presence of ATP and magnesium. alpha-casein is the usual test substrate. In the absence of ATP, only oligopeptides shorter than five residues are hydrolyzed (such as succinyl-Leu-Tyr-|-NHMec, and Leu-Tyr-Leu-|-Tyr-Trp, in which cleavage of the -Tyr-|-Leu- and -Tyr-|-Trp bonds also occurs).</text>
        <dbReference type="EC" id="3.4.21.92"/>
    </reaction>
</comment>
<comment type="subunit">
    <text evidence="1">Fourteen ClpP subunits assemble into 2 heptameric rings which stack back to back to give a disk-like structure with a central cavity, resembling the structure of eukaryotic proteasomes.</text>
</comment>
<comment type="subcellular location">
    <subcellularLocation>
        <location evidence="1">Cytoplasm</location>
    </subcellularLocation>
</comment>
<comment type="similarity">
    <text evidence="1">Belongs to the peptidase S14 family.</text>
</comment>
<feature type="chain" id="PRO_1000080885" description="ATP-dependent Clp protease proteolytic subunit">
    <location>
        <begin position="1"/>
        <end position="194"/>
    </location>
</feature>
<feature type="active site" description="Nucleophile" evidence="1">
    <location>
        <position position="98"/>
    </location>
</feature>
<feature type="active site" evidence="1">
    <location>
        <position position="123"/>
    </location>
</feature>
<gene>
    <name evidence="1" type="primary">clpP</name>
    <name type="ordered locus">CKL_3351</name>
</gene>
<keyword id="KW-0963">Cytoplasm</keyword>
<keyword id="KW-0378">Hydrolase</keyword>
<keyword id="KW-0645">Protease</keyword>
<keyword id="KW-1185">Reference proteome</keyword>
<keyword id="KW-0720">Serine protease</keyword>
<protein>
    <recommendedName>
        <fullName evidence="1">ATP-dependent Clp protease proteolytic subunit</fullName>
        <ecNumber evidence="1">3.4.21.92</ecNumber>
    </recommendedName>
    <alternativeName>
        <fullName evidence="1">Endopeptidase Clp</fullName>
    </alternativeName>
</protein>
<dbReference type="EC" id="3.4.21.92" evidence="1"/>
<dbReference type="EMBL" id="CP000673">
    <property type="protein sequence ID" value="EDK35354.1"/>
    <property type="molecule type" value="Genomic_DNA"/>
</dbReference>
<dbReference type="RefSeq" id="WP_012103684.1">
    <property type="nucleotide sequence ID" value="NC_009706.1"/>
</dbReference>
<dbReference type="SMR" id="A5N2K8"/>
<dbReference type="STRING" id="431943.CKL_3351"/>
<dbReference type="MEROPS" id="S14.001"/>
<dbReference type="KEGG" id="ckl:CKL_3351"/>
<dbReference type="eggNOG" id="COG0740">
    <property type="taxonomic scope" value="Bacteria"/>
</dbReference>
<dbReference type="HOGENOM" id="CLU_058707_3_2_9"/>
<dbReference type="Proteomes" id="UP000002411">
    <property type="component" value="Chromosome"/>
</dbReference>
<dbReference type="GO" id="GO:0005737">
    <property type="term" value="C:cytoplasm"/>
    <property type="evidence" value="ECO:0007669"/>
    <property type="project" value="UniProtKB-SubCell"/>
</dbReference>
<dbReference type="GO" id="GO:0009368">
    <property type="term" value="C:endopeptidase Clp complex"/>
    <property type="evidence" value="ECO:0007669"/>
    <property type="project" value="TreeGrafter"/>
</dbReference>
<dbReference type="GO" id="GO:0004176">
    <property type="term" value="F:ATP-dependent peptidase activity"/>
    <property type="evidence" value="ECO:0007669"/>
    <property type="project" value="InterPro"/>
</dbReference>
<dbReference type="GO" id="GO:0051117">
    <property type="term" value="F:ATPase binding"/>
    <property type="evidence" value="ECO:0007669"/>
    <property type="project" value="TreeGrafter"/>
</dbReference>
<dbReference type="GO" id="GO:0004252">
    <property type="term" value="F:serine-type endopeptidase activity"/>
    <property type="evidence" value="ECO:0007669"/>
    <property type="project" value="UniProtKB-UniRule"/>
</dbReference>
<dbReference type="GO" id="GO:0006515">
    <property type="term" value="P:protein quality control for misfolded or incompletely synthesized proteins"/>
    <property type="evidence" value="ECO:0007669"/>
    <property type="project" value="TreeGrafter"/>
</dbReference>
<dbReference type="CDD" id="cd07017">
    <property type="entry name" value="S14_ClpP_2"/>
    <property type="match status" value="1"/>
</dbReference>
<dbReference type="FunFam" id="3.90.226.10:FF:000001">
    <property type="entry name" value="ATP-dependent Clp protease proteolytic subunit"/>
    <property type="match status" value="1"/>
</dbReference>
<dbReference type="Gene3D" id="3.90.226.10">
    <property type="entry name" value="2-enoyl-CoA Hydratase, Chain A, domain 1"/>
    <property type="match status" value="1"/>
</dbReference>
<dbReference type="HAMAP" id="MF_00444">
    <property type="entry name" value="ClpP"/>
    <property type="match status" value="1"/>
</dbReference>
<dbReference type="InterPro" id="IPR001907">
    <property type="entry name" value="ClpP"/>
</dbReference>
<dbReference type="InterPro" id="IPR029045">
    <property type="entry name" value="ClpP/crotonase-like_dom_sf"/>
</dbReference>
<dbReference type="InterPro" id="IPR023562">
    <property type="entry name" value="ClpP/TepA"/>
</dbReference>
<dbReference type="InterPro" id="IPR033135">
    <property type="entry name" value="ClpP_His_AS"/>
</dbReference>
<dbReference type="InterPro" id="IPR018215">
    <property type="entry name" value="ClpP_Ser_AS"/>
</dbReference>
<dbReference type="NCBIfam" id="TIGR00493">
    <property type="entry name" value="clpP"/>
    <property type="match status" value="1"/>
</dbReference>
<dbReference type="NCBIfam" id="NF001368">
    <property type="entry name" value="PRK00277.1"/>
    <property type="match status" value="1"/>
</dbReference>
<dbReference type="NCBIfam" id="NF009205">
    <property type="entry name" value="PRK12553.1"/>
    <property type="match status" value="1"/>
</dbReference>
<dbReference type="PANTHER" id="PTHR10381">
    <property type="entry name" value="ATP-DEPENDENT CLP PROTEASE PROTEOLYTIC SUBUNIT"/>
    <property type="match status" value="1"/>
</dbReference>
<dbReference type="PANTHER" id="PTHR10381:SF70">
    <property type="entry name" value="ATP-DEPENDENT CLP PROTEASE PROTEOLYTIC SUBUNIT"/>
    <property type="match status" value="1"/>
</dbReference>
<dbReference type="Pfam" id="PF00574">
    <property type="entry name" value="CLP_protease"/>
    <property type="match status" value="1"/>
</dbReference>
<dbReference type="PRINTS" id="PR00127">
    <property type="entry name" value="CLPPROTEASEP"/>
</dbReference>
<dbReference type="SUPFAM" id="SSF52096">
    <property type="entry name" value="ClpP/crotonase"/>
    <property type="match status" value="1"/>
</dbReference>
<dbReference type="PROSITE" id="PS00382">
    <property type="entry name" value="CLP_PROTEASE_HIS"/>
    <property type="match status" value="1"/>
</dbReference>
<dbReference type="PROSITE" id="PS00381">
    <property type="entry name" value="CLP_PROTEASE_SER"/>
    <property type="match status" value="1"/>
</dbReference>
<reference key="1">
    <citation type="journal article" date="2008" name="Proc. Natl. Acad. Sci. U.S.A.">
        <title>The genome of Clostridium kluyveri, a strict anaerobe with unique metabolic features.</title>
        <authorList>
            <person name="Seedorf H."/>
            <person name="Fricke W.F."/>
            <person name="Veith B."/>
            <person name="Brueggemann H."/>
            <person name="Liesegang H."/>
            <person name="Strittmatter A."/>
            <person name="Miethke M."/>
            <person name="Buckel W."/>
            <person name="Hinderberger J."/>
            <person name="Li F."/>
            <person name="Hagemeier C."/>
            <person name="Thauer R.K."/>
            <person name="Gottschalk G."/>
        </authorList>
    </citation>
    <scope>NUCLEOTIDE SEQUENCE [LARGE SCALE GENOMIC DNA]</scope>
    <source>
        <strain>ATCC 8527 / DSM 555 / NBRC 12016 / NCIMB 10680 / K1</strain>
    </source>
</reference>
<name>CLPP_CLOK5</name>
<sequence>MSLVPVVVEQTNRGERSYDIYSRLLKDRIVMLSEEVNDVTASLIVAQLLFLEAENPDKDIYFYINSPGGSITAGMAIYDTMQYIKSDVSTICIGMAASMGAFLLAAGEKGKRFALPNSEIMIHQPLGGFQGQATDIGIHADRILRIKKKLNAIISERTGQSIEKVEKDTERDNFMTAEEAKEYGLIDEVFTKKK</sequence>
<evidence type="ECO:0000255" key="1">
    <source>
        <dbReference type="HAMAP-Rule" id="MF_00444"/>
    </source>
</evidence>